<feature type="chain" id="PRO_1000204847" description="Phenylalanine--tRNA ligase beta subunit">
    <location>
        <begin position="1"/>
        <end position="545"/>
    </location>
</feature>
<feature type="domain" description="B5" evidence="1">
    <location>
        <begin position="268"/>
        <end position="343"/>
    </location>
</feature>
<feature type="binding site" evidence="1">
    <location>
        <position position="321"/>
    </location>
    <ligand>
        <name>Mg(2+)</name>
        <dbReference type="ChEBI" id="CHEBI:18420"/>
        <note>shared with alpha subunit</note>
    </ligand>
</feature>
<feature type="binding site" evidence="1">
    <location>
        <position position="327"/>
    </location>
    <ligand>
        <name>Mg(2+)</name>
        <dbReference type="ChEBI" id="CHEBI:18420"/>
        <note>shared with alpha subunit</note>
    </ligand>
</feature>
<feature type="binding site" evidence="1">
    <location>
        <position position="330"/>
    </location>
    <ligand>
        <name>Mg(2+)</name>
        <dbReference type="ChEBI" id="CHEBI:18420"/>
        <note>shared with alpha subunit</note>
    </ligand>
</feature>
<feature type="binding site" evidence="1">
    <location>
        <position position="331"/>
    </location>
    <ligand>
        <name>Mg(2+)</name>
        <dbReference type="ChEBI" id="CHEBI:18420"/>
        <note>shared with alpha subunit</note>
    </ligand>
</feature>
<reference key="1">
    <citation type="journal article" date="2009" name="Proc. Natl. Acad. Sci. U.S.A.">
        <title>Biogeography of the Sulfolobus islandicus pan-genome.</title>
        <authorList>
            <person name="Reno M.L."/>
            <person name="Held N.L."/>
            <person name="Fields C.J."/>
            <person name="Burke P.V."/>
            <person name="Whitaker R.J."/>
        </authorList>
    </citation>
    <scope>NUCLEOTIDE SEQUENCE [LARGE SCALE GENOMIC DNA]</scope>
    <source>
        <strain>Y.G.57.14 / Yellowstone #1</strain>
    </source>
</reference>
<dbReference type="EC" id="6.1.1.20" evidence="1"/>
<dbReference type="EMBL" id="CP001403">
    <property type="protein sequence ID" value="ACP46398.1"/>
    <property type="molecule type" value="Genomic_DNA"/>
</dbReference>
<dbReference type="RefSeq" id="WP_012716484.1">
    <property type="nucleotide sequence ID" value="NC_012622.1"/>
</dbReference>
<dbReference type="SMR" id="C3N8B1"/>
<dbReference type="GeneID" id="7807969"/>
<dbReference type="GeneID" id="7811197"/>
<dbReference type="KEGG" id="siy:YG5714_2149"/>
<dbReference type="HOGENOM" id="CLU_020279_3_0_2"/>
<dbReference type="Proteomes" id="UP000002308">
    <property type="component" value="Chromosome"/>
</dbReference>
<dbReference type="GO" id="GO:0009328">
    <property type="term" value="C:phenylalanine-tRNA ligase complex"/>
    <property type="evidence" value="ECO:0007669"/>
    <property type="project" value="TreeGrafter"/>
</dbReference>
<dbReference type="GO" id="GO:0005524">
    <property type="term" value="F:ATP binding"/>
    <property type="evidence" value="ECO:0007669"/>
    <property type="project" value="UniProtKB-UniRule"/>
</dbReference>
<dbReference type="GO" id="GO:0000287">
    <property type="term" value="F:magnesium ion binding"/>
    <property type="evidence" value="ECO:0007669"/>
    <property type="project" value="InterPro"/>
</dbReference>
<dbReference type="GO" id="GO:0004826">
    <property type="term" value="F:phenylalanine-tRNA ligase activity"/>
    <property type="evidence" value="ECO:0007669"/>
    <property type="project" value="UniProtKB-UniRule"/>
</dbReference>
<dbReference type="GO" id="GO:0003723">
    <property type="term" value="F:RNA binding"/>
    <property type="evidence" value="ECO:0007669"/>
    <property type="project" value="InterPro"/>
</dbReference>
<dbReference type="GO" id="GO:0006432">
    <property type="term" value="P:phenylalanyl-tRNA aminoacylation"/>
    <property type="evidence" value="ECO:0007669"/>
    <property type="project" value="UniProtKB-UniRule"/>
</dbReference>
<dbReference type="CDD" id="cd00769">
    <property type="entry name" value="PheRS_beta_core"/>
    <property type="match status" value="1"/>
</dbReference>
<dbReference type="FunFam" id="3.30.56.10:FF:000014">
    <property type="entry name" value="Phenylalanine--tRNA ligase beta subunit"/>
    <property type="match status" value="1"/>
</dbReference>
<dbReference type="Gene3D" id="3.30.56.10">
    <property type="match status" value="2"/>
</dbReference>
<dbReference type="Gene3D" id="3.30.930.10">
    <property type="entry name" value="Bira Bifunctional Protein, Domain 2"/>
    <property type="match status" value="1"/>
</dbReference>
<dbReference type="Gene3D" id="3.50.40.10">
    <property type="entry name" value="Phenylalanyl-trna Synthetase, Chain B, domain 3"/>
    <property type="match status" value="1"/>
</dbReference>
<dbReference type="HAMAP" id="MF_00284">
    <property type="entry name" value="Phe_tRNA_synth_beta2"/>
    <property type="match status" value="1"/>
</dbReference>
<dbReference type="InterPro" id="IPR045864">
    <property type="entry name" value="aa-tRNA-synth_II/BPL/LPL"/>
</dbReference>
<dbReference type="InterPro" id="IPR005146">
    <property type="entry name" value="B3/B4_tRNA-bd"/>
</dbReference>
<dbReference type="InterPro" id="IPR009061">
    <property type="entry name" value="DNA-bd_dom_put_sf"/>
</dbReference>
<dbReference type="InterPro" id="IPR045060">
    <property type="entry name" value="Phe-tRNA-ligase_IIc_bsu"/>
</dbReference>
<dbReference type="InterPro" id="IPR004531">
    <property type="entry name" value="Phe-tRNA-synth_IIc_bsu_arc_euk"/>
</dbReference>
<dbReference type="InterPro" id="IPR020825">
    <property type="entry name" value="Phe-tRNA_synthase-like_B3/B4"/>
</dbReference>
<dbReference type="InterPro" id="IPR022918">
    <property type="entry name" value="Phe_tRNA_ligase_beta2_arc"/>
</dbReference>
<dbReference type="InterPro" id="IPR041616">
    <property type="entry name" value="PheRS_beta_core"/>
</dbReference>
<dbReference type="InterPro" id="IPR005147">
    <property type="entry name" value="tRNA_synthase_B5-dom"/>
</dbReference>
<dbReference type="NCBIfam" id="TIGR00471">
    <property type="entry name" value="pheT_arch"/>
    <property type="match status" value="1"/>
</dbReference>
<dbReference type="PANTHER" id="PTHR10947:SF0">
    <property type="entry name" value="PHENYLALANINE--TRNA LIGASE BETA SUBUNIT"/>
    <property type="match status" value="1"/>
</dbReference>
<dbReference type="PANTHER" id="PTHR10947">
    <property type="entry name" value="PHENYLALANYL-TRNA SYNTHETASE BETA CHAIN AND LEUCINE-RICH REPEAT-CONTAINING PROTEIN 47"/>
    <property type="match status" value="1"/>
</dbReference>
<dbReference type="Pfam" id="PF03483">
    <property type="entry name" value="B3_4"/>
    <property type="match status" value="1"/>
</dbReference>
<dbReference type="Pfam" id="PF03484">
    <property type="entry name" value="B5"/>
    <property type="match status" value="1"/>
</dbReference>
<dbReference type="Pfam" id="PF17759">
    <property type="entry name" value="tRNA_synthFbeta"/>
    <property type="match status" value="1"/>
</dbReference>
<dbReference type="SMART" id="SM00873">
    <property type="entry name" value="B3_4"/>
    <property type="match status" value="1"/>
</dbReference>
<dbReference type="SMART" id="SM00874">
    <property type="entry name" value="B5"/>
    <property type="match status" value="1"/>
</dbReference>
<dbReference type="SUPFAM" id="SSF55681">
    <property type="entry name" value="Class II aaRS and biotin synthetases"/>
    <property type="match status" value="1"/>
</dbReference>
<dbReference type="SUPFAM" id="SSF46955">
    <property type="entry name" value="Putative DNA-binding domain"/>
    <property type="match status" value="2"/>
</dbReference>
<dbReference type="PROSITE" id="PS51483">
    <property type="entry name" value="B5"/>
    <property type="match status" value="1"/>
</dbReference>
<evidence type="ECO:0000255" key="1">
    <source>
        <dbReference type="HAMAP-Rule" id="MF_00284"/>
    </source>
</evidence>
<name>SYFB_SACI7</name>
<keyword id="KW-0030">Aminoacyl-tRNA synthetase</keyword>
<keyword id="KW-0067">ATP-binding</keyword>
<keyword id="KW-0963">Cytoplasm</keyword>
<keyword id="KW-0436">Ligase</keyword>
<keyword id="KW-0460">Magnesium</keyword>
<keyword id="KW-0479">Metal-binding</keyword>
<keyword id="KW-0547">Nucleotide-binding</keyword>
<keyword id="KW-0648">Protein biosynthesis</keyword>
<proteinExistence type="inferred from homology"/>
<sequence length="545" mass="61701">MVTIVLNKYKLLDKIHIGQQKLEDLLFNLKSEVKPIDENNIEIEINADRLDLLSSDGIARAIKGLLEKELGEAKYNVTDTEYTLIVDNVRTRPYALAAIVYNAKIDLEELIQFQEKLHGTIGRKRKKVAIGIHDLRKVDSKTIEYKEVPLSYKFVPLYGNKELTISEILEKTEQGKLYGNISIANGVSPAIVQDDGEVLSIPPIINSNKTRLDENTKDFFIDVTGTSFEAVAQTLDIIVSNLAEAGGTIGRVKVLKSANSSQLSSPLFLHKIQNVREEYVKKILGIKTSKEEICKHVMRMRMNCDIENGVIRVTVPQYRVDILNEIDVVEDIAMSIGYNNLEPSKYISTNYGSYDYMTLLERKIRELGIGAGYVEISNFVLIKDEKLFSNKYVKILNPVTEEYNAVRDSLIPGLLDFLSKNQHAKFPIRVFETGDVVVYDSSTDTGFRNDKRAAYAIMDNKVSYEDIQAPIHYILKSLGLEVNYKEENNNIFIEGRSASIFYENEKMGVIGEVNPDVLIRFGIEYPAVIAELYISEIGKRLTNQR</sequence>
<gene>
    <name evidence="1" type="primary">pheT</name>
    <name type="ordered locus">YG5714_2149</name>
</gene>
<accession>C3N8B1</accession>
<comment type="catalytic activity">
    <reaction evidence="1">
        <text>tRNA(Phe) + L-phenylalanine + ATP = L-phenylalanyl-tRNA(Phe) + AMP + diphosphate + H(+)</text>
        <dbReference type="Rhea" id="RHEA:19413"/>
        <dbReference type="Rhea" id="RHEA-COMP:9668"/>
        <dbReference type="Rhea" id="RHEA-COMP:9699"/>
        <dbReference type="ChEBI" id="CHEBI:15378"/>
        <dbReference type="ChEBI" id="CHEBI:30616"/>
        <dbReference type="ChEBI" id="CHEBI:33019"/>
        <dbReference type="ChEBI" id="CHEBI:58095"/>
        <dbReference type="ChEBI" id="CHEBI:78442"/>
        <dbReference type="ChEBI" id="CHEBI:78531"/>
        <dbReference type="ChEBI" id="CHEBI:456215"/>
        <dbReference type="EC" id="6.1.1.20"/>
    </reaction>
</comment>
<comment type="cofactor">
    <cofactor evidence="1">
        <name>Mg(2+)</name>
        <dbReference type="ChEBI" id="CHEBI:18420"/>
    </cofactor>
</comment>
<comment type="subunit">
    <text evidence="1">Tetramer of two alpha and two beta subunits.</text>
</comment>
<comment type="subcellular location">
    <subcellularLocation>
        <location evidence="1">Cytoplasm</location>
    </subcellularLocation>
</comment>
<comment type="similarity">
    <text evidence="1">Belongs to the phenylalanyl-tRNA synthetase beta subunit family. Type 2 subfamily.</text>
</comment>
<organism>
    <name type="scientific">Saccharolobus islandicus (strain Y.G.57.14 / Yellowstone #1)</name>
    <name type="common">Sulfolobus islandicus</name>
    <dbReference type="NCBI Taxonomy" id="439386"/>
    <lineage>
        <taxon>Archaea</taxon>
        <taxon>Thermoproteota</taxon>
        <taxon>Thermoprotei</taxon>
        <taxon>Sulfolobales</taxon>
        <taxon>Sulfolobaceae</taxon>
        <taxon>Saccharolobus</taxon>
    </lineage>
</organism>
<protein>
    <recommendedName>
        <fullName evidence="1">Phenylalanine--tRNA ligase beta subunit</fullName>
        <ecNumber evidence="1">6.1.1.20</ecNumber>
    </recommendedName>
    <alternativeName>
        <fullName evidence="1">Phenylalanyl-tRNA synthetase beta subunit</fullName>
        <shortName evidence="1">PheRS</shortName>
    </alternativeName>
</protein>